<dbReference type="EC" id="3.1.1.29" evidence="1"/>
<dbReference type="EMBL" id="CP000058">
    <property type="protein sequence ID" value="AAZ35742.1"/>
    <property type="molecule type" value="Genomic_DNA"/>
</dbReference>
<dbReference type="RefSeq" id="WP_003317127.1">
    <property type="nucleotide sequence ID" value="NC_005773.3"/>
</dbReference>
<dbReference type="SMR" id="Q48MW1"/>
<dbReference type="GeneID" id="96217332"/>
<dbReference type="KEGG" id="psp:PSPPH_0989"/>
<dbReference type="eggNOG" id="COG0193">
    <property type="taxonomic scope" value="Bacteria"/>
</dbReference>
<dbReference type="HOGENOM" id="CLU_062456_3_1_6"/>
<dbReference type="Proteomes" id="UP000000551">
    <property type="component" value="Chromosome"/>
</dbReference>
<dbReference type="GO" id="GO:0005737">
    <property type="term" value="C:cytoplasm"/>
    <property type="evidence" value="ECO:0007669"/>
    <property type="project" value="UniProtKB-SubCell"/>
</dbReference>
<dbReference type="GO" id="GO:0004045">
    <property type="term" value="F:peptidyl-tRNA hydrolase activity"/>
    <property type="evidence" value="ECO:0007669"/>
    <property type="project" value="UniProtKB-UniRule"/>
</dbReference>
<dbReference type="GO" id="GO:0000049">
    <property type="term" value="F:tRNA binding"/>
    <property type="evidence" value="ECO:0007669"/>
    <property type="project" value="UniProtKB-UniRule"/>
</dbReference>
<dbReference type="GO" id="GO:0006515">
    <property type="term" value="P:protein quality control for misfolded or incompletely synthesized proteins"/>
    <property type="evidence" value="ECO:0007669"/>
    <property type="project" value="UniProtKB-UniRule"/>
</dbReference>
<dbReference type="GO" id="GO:0072344">
    <property type="term" value="P:rescue of stalled ribosome"/>
    <property type="evidence" value="ECO:0007669"/>
    <property type="project" value="UniProtKB-UniRule"/>
</dbReference>
<dbReference type="CDD" id="cd00462">
    <property type="entry name" value="PTH"/>
    <property type="match status" value="1"/>
</dbReference>
<dbReference type="FunFam" id="3.40.50.1470:FF:000001">
    <property type="entry name" value="Peptidyl-tRNA hydrolase"/>
    <property type="match status" value="1"/>
</dbReference>
<dbReference type="Gene3D" id="3.40.50.1470">
    <property type="entry name" value="Peptidyl-tRNA hydrolase"/>
    <property type="match status" value="1"/>
</dbReference>
<dbReference type="HAMAP" id="MF_00083">
    <property type="entry name" value="Pept_tRNA_hydro_bact"/>
    <property type="match status" value="1"/>
</dbReference>
<dbReference type="InterPro" id="IPR001328">
    <property type="entry name" value="Pept_tRNA_hydro"/>
</dbReference>
<dbReference type="InterPro" id="IPR018171">
    <property type="entry name" value="Pept_tRNA_hydro_CS"/>
</dbReference>
<dbReference type="InterPro" id="IPR036416">
    <property type="entry name" value="Pept_tRNA_hydro_sf"/>
</dbReference>
<dbReference type="NCBIfam" id="TIGR00447">
    <property type="entry name" value="pth"/>
    <property type="match status" value="1"/>
</dbReference>
<dbReference type="PANTHER" id="PTHR17224">
    <property type="entry name" value="PEPTIDYL-TRNA HYDROLASE"/>
    <property type="match status" value="1"/>
</dbReference>
<dbReference type="PANTHER" id="PTHR17224:SF1">
    <property type="entry name" value="PEPTIDYL-TRNA HYDROLASE"/>
    <property type="match status" value="1"/>
</dbReference>
<dbReference type="Pfam" id="PF01195">
    <property type="entry name" value="Pept_tRNA_hydro"/>
    <property type="match status" value="1"/>
</dbReference>
<dbReference type="SUPFAM" id="SSF53178">
    <property type="entry name" value="Peptidyl-tRNA hydrolase-like"/>
    <property type="match status" value="1"/>
</dbReference>
<dbReference type="PROSITE" id="PS01195">
    <property type="entry name" value="PEPT_TRNA_HYDROL_1"/>
    <property type="match status" value="1"/>
</dbReference>
<dbReference type="PROSITE" id="PS01196">
    <property type="entry name" value="PEPT_TRNA_HYDROL_2"/>
    <property type="match status" value="1"/>
</dbReference>
<reference key="1">
    <citation type="journal article" date="2005" name="J. Bacteriol.">
        <title>Whole-genome sequence analysis of Pseudomonas syringae pv. phaseolicola 1448A reveals divergence among pathovars in genes involved in virulence and transposition.</title>
        <authorList>
            <person name="Joardar V."/>
            <person name="Lindeberg M."/>
            <person name="Jackson R.W."/>
            <person name="Selengut J."/>
            <person name="Dodson R."/>
            <person name="Brinkac L.M."/>
            <person name="Daugherty S.C."/>
            <person name="DeBoy R.T."/>
            <person name="Durkin A.S."/>
            <person name="Gwinn Giglio M."/>
            <person name="Madupu R."/>
            <person name="Nelson W.C."/>
            <person name="Rosovitz M.J."/>
            <person name="Sullivan S.A."/>
            <person name="Crabtree J."/>
            <person name="Creasy T."/>
            <person name="Davidsen T.M."/>
            <person name="Haft D.H."/>
            <person name="Zafar N."/>
            <person name="Zhou L."/>
            <person name="Halpin R."/>
            <person name="Holley T."/>
            <person name="Khouri H.M."/>
            <person name="Feldblyum T.V."/>
            <person name="White O."/>
            <person name="Fraser C.M."/>
            <person name="Chatterjee A.K."/>
            <person name="Cartinhour S."/>
            <person name="Schneider D."/>
            <person name="Mansfield J.W."/>
            <person name="Collmer A."/>
            <person name="Buell R."/>
        </authorList>
    </citation>
    <scope>NUCLEOTIDE SEQUENCE [LARGE SCALE GENOMIC DNA]</scope>
    <source>
        <strain>1448A / Race 6</strain>
    </source>
</reference>
<keyword id="KW-0963">Cytoplasm</keyword>
<keyword id="KW-0378">Hydrolase</keyword>
<keyword id="KW-0694">RNA-binding</keyword>
<keyword id="KW-0820">tRNA-binding</keyword>
<accession>Q48MW1</accession>
<comment type="function">
    <text evidence="1">Hydrolyzes ribosome-free peptidyl-tRNAs (with 1 or more amino acids incorporated), which drop off the ribosome during protein synthesis, or as a result of ribosome stalling.</text>
</comment>
<comment type="function">
    <text evidence="1">Catalyzes the release of premature peptidyl moieties from peptidyl-tRNA molecules trapped in stalled 50S ribosomal subunits, and thus maintains levels of free tRNAs and 50S ribosomes.</text>
</comment>
<comment type="catalytic activity">
    <reaction evidence="1">
        <text>an N-acyl-L-alpha-aminoacyl-tRNA + H2O = an N-acyl-L-amino acid + a tRNA + H(+)</text>
        <dbReference type="Rhea" id="RHEA:54448"/>
        <dbReference type="Rhea" id="RHEA-COMP:10123"/>
        <dbReference type="Rhea" id="RHEA-COMP:13883"/>
        <dbReference type="ChEBI" id="CHEBI:15377"/>
        <dbReference type="ChEBI" id="CHEBI:15378"/>
        <dbReference type="ChEBI" id="CHEBI:59874"/>
        <dbReference type="ChEBI" id="CHEBI:78442"/>
        <dbReference type="ChEBI" id="CHEBI:138191"/>
        <dbReference type="EC" id="3.1.1.29"/>
    </reaction>
</comment>
<comment type="subunit">
    <text evidence="1">Monomer.</text>
</comment>
<comment type="subcellular location">
    <subcellularLocation>
        <location evidence="1">Cytoplasm</location>
    </subcellularLocation>
</comment>
<comment type="similarity">
    <text evidence="1">Belongs to the PTH family.</text>
</comment>
<evidence type="ECO:0000255" key="1">
    <source>
        <dbReference type="HAMAP-Rule" id="MF_00083"/>
    </source>
</evidence>
<proteinExistence type="inferred from homology"/>
<name>PTH_PSE14</name>
<feature type="chain" id="PRO_0000264081" description="Peptidyl-tRNA hydrolase">
    <location>
        <begin position="1"/>
        <end position="194"/>
    </location>
</feature>
<feature type="active site" description="Proton acceptor" evidence="1">
    <location>
        <position position="22"/>
    </location>
</feature>
<feature type="binding site" evidence="1">
    <location>
        <position position="17"/>
    </location>
    <ligand>
        <name>tRNA</name>
        <dbReference type="ChEBI" id="CHEBI:17843"/>
    </ligand>
</feature>
<feature type="binding site" evidence="1">
    <location>
        <position position="68"/>
    </location>
    <ligand>
        <name>tRNA</name>
        <dbReference type="ChEBI" id="CHEBI:17843"/>
    </ligand>
</feature>
<feature type="binding site" evidence="1">
    <location>
        <position position="70"/>
    </location>
    <ligand>
        <name>tRNA</name>
        <dbReference type="ChEBI" id="CHEBI:17843"/>
    </ligand>
</feature>
<feature type="binding site" evidence="1">
    <location>
        <position position="116"/>
    </location>
    <ligand>
        <name>tRNA</name>
        <dbReference type="ChEBI" id="CHEBI:17843"/>
    </ligand>
</feature>
<feature type="site" description="Discriminates between blocked and unblocked aminoacyl-tRNA" evidence="1">
    <location>
        <position position="12"/>
    </location>
</feature>
<feature type="site" description="Stabilizes the basic form of H active site to accept a proton" evidence="1">
    <location>
        <position position="95"/>
    </location>
</feature>
<gene>
    <name evidence="1" type="primary">pth</name>
    <name type="ordered locus">PSPPH_0989</name>
</gene>
<sequence>MTAIQLIVGLGNPGAEYEQTRHNAGAFFVERIAAAQRVNLVPERKFFGLTGRFTHQGQDVRLLIPTTYMNRSGQAVAALAGFYRIPVESILVAHDELDLPPGVAKLKVGGGHGGHNGLRDIIAQLGNQNTFHRLRLGIGHPGDASKVSGFVLGRAPRAEQEKLDASIDFALGVLPDIFAGEWNRAMKNLHSQKA</sequence>
<protein>
    <recommendedName>
        <fullName evidence="1">Peptidyl-tRNA hydrolase</fullName>
        <shortName evidence="1">Pth</shortName>
        <ecNumber evidence="1">3.1.1.29</ecNumber>
    </recommendedName>
</protein>
<organism>
    <name type="scientific">Pseudomonas savastanoi pv. phaseolicola (strain 1448A / Race 6)</name>
    <name type="common">Pseudomonas syringae pv. phaseolicola (strain 1448A / Race 6)</name>
    <dbReference type="NCBI Taxonomy" id="264730"/>
    <lineage>
        <taxon>Bacteria</taxon>
        <taxon>Pseudomonadati</taxon>
        <taxon>Pseudomonadota</taxon>
        <taxon>Gammaproteobacteria</taxon>
        <taxon>Pseudomonadales</taxon>
        <taxon>Pseudomonadaceae</taxon>
        <taxon>Pseudomonas</taxon>
    </lineage>
</organism>